<name>TPIS_PYRCJ</name>
<evidence type="ECO:0000255" key="1">
    <source>
        <dbReference type="HAMAP-Rule" id="MF_00147"/>
    </source>
</evidence>
<reference key="1">
    <citation type="submission" date="2007-02" db="EMBL/GenBank/DDBJ databases">
        <title>Complete sequence of Pyrobaculum calidifontis JCM 11548.</title>
        <authorList>
            <consortium name="US DOE Joint Genome Institute"/>
            <person name="Copeland A."/>
            <person name="Lucas S."/>
            <person name="Lapidus A."/>
            <person name="Barry K."/>
            <person name="Glavina del Rio T."/>
            <person name="Dalin E."/>
            <person name="Tice H."/>
            <person name="Pitluck S."/>
            <person name="Chain P."/>
            <person name="Malfatti S."/>
            <person name="Shin M."/>
            <person name="Vergez L."/>
            <person name="Schmutz J."/>
            <person name="Larimer F."/>
            <person name="Land M."/>
            <person name="Hauser L."/>
            <person name="Kyrpides N."/>
            <person name="Mikhailova N."/>
            <person name="Cozen A.E."/>
            <person name="Fitz-Gibbon S.T."/>
            <person name="House C.H."/>
            <person name="Saltikov C."/>
            <person name="Lowe T.M."/>
            <person name="Richardson P."/>
        </authorList>
    </citation>
    <scope>NUCLEOTIDE SEQUENCE [LARGE SCALE GENOMIC DNA]</scope>
    <source>
        <strain>DSM 21063 / JCM 11548 / VA1</strain>
    </source>
</reference>
<dbReference type="EC" id="5.3.1.1" evidence="1"/>
<dbReference type="EMBL" id="CP000561">
    <property type="protein sequence ID" value="ABO08243.1"/>
    <property type="molecule type" value="Genomic_DNA"/>
</dbReference>
<dbReference type="RefSeq" id="WP_011849501.1">
    <property type="nucleotide sequence ID" value="NC_009073.1"/>
</dbReference>
<dbReference type="SMR" id="A3MUC6"/>
<dbReference type="STRING" id="410359.Pcal_0817"/>
<dbReference type="GeneID" id="4909334"/>
<dbReference type="KEGG" id="pcl:Pcal_0817"/>
<dbReference type="eggNOG" id="arCOG01087">
    <property type="taxonomic scope" value="Archaea"/>
</dbReference>
<dbReference type="HOGENOM" id="CLU_104921_0_0_2"/>
<dbReference type="OrthoDB" id="9465at2157"/>
<dbReference type="UniPathway" id="UPA00109">
    <property type="reaction ID" value="UER00189"/>
</dbReference>
<dbReference type="UniPathway" id="UPA00138"/>
<dbReference type="Proteomes" id="UP000001431">
    <property type="component" value="Chromosome"/>
</dbReference>
<dbReference type="GO" id="GO:0005829">
    <property type="term" value="C:cytosol"/>
    <property type="evidence" value="ECO:0007669"/>
    <property type="project" value="TreeGrafter"/>
</dbReference>
<dbReference type="GO" id="GO:0004807">
    <property type="term" value="F:triose-phosphate isomerase activity"/>
    <property type="evidence" value="ECO:0007669"/>
    <property type="project" value="UniProtKB-UniRule"/>
</dbReference>
<dbReference type="GO" id="GO:0006094">
    <property type="term" value="P:gluconeogenesis"/>
    <property type="evidence" value="ECO:0007669"/>
    <property type="project" value="UniProtKB-UniRule"/>
</dbReference>
<dbReference type="GO" id="GO:0046166">
    <property type="term" value="P:glyceraldehyde-3-phosphate biosynthetic process"/>
    <property type="evidence" value="ECO:0007669"/>
    <property type="project" value="TreeGrafter"/>
</dbReference>
<dbReference type="GO" id="GO:0019563">
    <property type="term" value="P:glycerol catabolic process"/>
    <property type="evidence" value="ECO:0007669"/>
    <property type="project" value="TreeGrafter"/>
</dbReference>
<dbReference type="GO" id="GO:0006096">
    <property type="term" value="P:glycolytic process"/>
    <property type="evidence" value="ECO:0007669"/>
    <property type="project" value="UniProtKB-UniRule"/>
</dbReference>
<dbReference type="CDD" id="cd00311">
    <property type="entry name" value="TIM"/>
    <property type="match status" value="1"/>
</dbReference>
<dbReference type="FunFam" id="3.20.20.70:FF:000223">
    <property type="entry name" value="Triosephosphate isomerase"/>
    <property type="match status" value="1"/>
</dbReference>
<dbReference type="Gene3D" id="3.20.20.70">
    <property type="entry name" value="Aldolase class I"/>
    <property type="match status" value="1"/>
</dbReference>
<dbReference type="HAMAP" id="MF_00147_A">
    <property type="entry name" value="TIM_A"/>
    <property type="match status" value="1"/>
</dbReference>
<dbReference type="InterPro" id="IPR013785">
    <property type="entry name" value="Aldolase_TIM"/>
</dbReference>
<dbReference type="InterPro" id="IPR035990">
    <property type="entry name" value="TIM_sf"/>
</dbReference>
<dbReference type="InterPro" id="IPR000652">
    <property type="entry name" value="Triosephosphate_isomerase"/>
</dbReference>
<dbReference type="InterPro" id="IPR022891">
    <property type="entry name" value="Triosephosphate_isomerase_arc"/>
</dbReference>
<dbReference type="InterPro" id="IPR020861">
    <property type="entry name" value="Triosephosphate_isomerase_AS"/>
</dbReference>
<dbReference type="NCBIfam" id="NF003302">
    <property type="entry name" value="PRK04302.1"/>
    <property type="match status" value="1"/>
</dbReference>
<dbReference type="NCBIfam" id="TIGR00419">
    <property type="entry name" value="tim"/>
    <property type="match status" value="1"/>
</dbReference>
<dbReference type="PANTHER" id="PTHR21139">
    <property type="entry name" value="TRIOSEPHOSPHATE ISOMERASE"/>
    <property type="match status" value="1"/>
</dbReference>
<dbReference type="PANTHER" id="PTHR21139:SF42">
    <property type="entry name" value="TRIOSEPHOSPHATE ISOMERASE"/>
    <property type="match status" value="1"/>
</dbReference>
<dbReference type="Pfam" id="PF00121">
    <property type="entry name" value="TIM"/>
    <property type="match status" value="1"/>
</dbReference>
<dbReference type="SUPFAM" id="SSF51351">
    <property type="entry name" value="Triosephosphate isomerase (TIM)"/>
    <property type="match status" value="1"/>
</dbReference>
<dbReference type="PROSITE" id="PS00171">
    <property type="entry name" value="TIM_1"/>
    <property type="match status" value="1"/>
</dbReference>
<dbReference type="PROSITE" id="PS51440">
    <property type="entry name" value="TIM_2"/>
    <property type="match status" value="1"/>
</dbReference>
<comment type="function">
    <text evidence="1">Involved in the gluconeogenesis. Catalyzes stereospecifically the conversion of dihydroxyacetone phosphate (DHAP) to D-glyceraldehyde-3-phosphate (G3P).</text>
</comment>
<comment type="catalytic activity">
    <reaction evidence="1">
        <text>D-glyceraldehyde 3-phosphate = dihydroxyacetone phosphate</text>
        <dbReference type="Rhea" id="RHEA:18585"/>
        <dbReference type="ChEBI" id="CHEBI:57642"/>
        <dbReference type="ChEBI" id="CHEBI:59776"/>
        <dbReference type="EC" id="5.3.1.1"/>
    </reaction>
</comment>
<comment type="pathway">
    <text evidence="1">Carbohydrate biosynthesis; gluconeogenesis.</text>
</comment>
<comment type="pathway">
    <text evidence="1">Carbohydrate degradation; glycolysis; D-glyceraldehyde 3-phosphate from glycerone phosphate: step 1/1.</text>
</comment>
<comment type="subunit">
    <text evidence="1">Homotetramer; dimer of dimers.</text>
</comment>
<comment type="subcellular location">
    <subcellularLocation>
        <location evidence="1">Cytoplasm</location>
    </subcellularLocation>
</comment>
<comment type="similarity">
    <text evidence="1">Belongs to the triosephosphate isomerase family.</text>
</comment>
<accession>A3MUC6</accession>
<organism>
    <name type="scientific">Pyrobaculum calidifontis (strain DSM 21063 / JCM 11548 / VA1)</name>
    <dbReference type="NCBI Taxonomy" id="410359"/>
    <lineage>
        <taxon>Archaea</taxon>
        <taxon>Thermoproteota</taxon>
        <taxon>Thermoprotei</taxon>
        <taxon>Thermoproteales</taxon>
        <taxon>Thermoproteaceae</taxon>
        <taxon>Pyrobaculum</taxon>
    </lineage>
</organism>
<gene>
    <name evidence="1" type="primary">tpiA</name>
    <name type="ordered locus">Pcal_0817</name>
</gene>
<feature type="chain" id="PRO_0000307609" description="Triosephosphate isomerase">
    <location>
        <begin position="1"/>
        <end position="228"/>
    </location>
</feature>
<feature type="active site" description="Electrophile" evidence="1">
    <location>
        <position position="93"/>
    </location>
</feature>
<feature type="active site" description="Proton acceptor" evidence="1">
    <location>
        <position position="141"/>
    </location>
</feature>
<feature type="binding site" evidence="1">
    <location>
        <begin position="9"/>
        <end position="11"/>
    </location>
    <ligand>
        <name>substrate</name>
    </ligand>
</feature>
<feature type="binding site" evidence="1">
    <location>
        <position position="146"/>
    </location>
    <ligand>
        <name>substrate</name>
    </ligand>
</feature>
<feature type="binding site" evidence="1">
    <location>
        <position position="181"/>
    </location>
    <ligand>
        <name>substrate</name>
    </ligand>
</feature>
<feature type="binding site" evidence="1">
    <location>
        <begin position="202"/>
        <end position="203"/>
    </location>
    <ligand>
        <name>substrate</name>
    </ligand>
</feature>
<proteinExistence type="inferred from homology"/>
<protein>
    <recommendedName>
        <fullName evidence="1">Triosephosphate isomerase</fullName>
        <shortName evidence="1">TIM</shortName>
        <shortName evidence="1">TPI</shortName>
        <ecNumber evidence="1">5.3.1.1</ecNumber>
    </recommendedName>
    <alternativeName>
        <fullName evidence="1">Triose-phosphate isomerase</fullName>
    </alternativeName>
</protein>
<keyword id="KW-0963">Cytoplasm</keyword>
<keyword id="KW-0312">Gluconeogenesis</keyword>
<keyword id="KW-0324">Glycolysis</keyword>
<keyword id="KW-0413">Isomerase</keyword>
<sequence>MRLPILIINFKAYREAAGKRAVELAKAAEKVAKELGVSIAVAPNHLELALVAASVDIPVYAQGVDVEKAGAYTAHVALENLREAGAVGVILNHSEAPLKLNDLAKYVEGGKAMGLDVVVCAPDPLTSLAAAALGPHAVAVEPPELIGTGRAVSKYKPETVVKTVELVSAHFPNVAVITGAGIESGEDVEAALRLGTRGVLLASAAVKAKDPYQKIMELAKPLVAAGPP</sequence>